<keyword id="KW-0067">ATP-binding</keyword>
<keyword id="KW-0547">Nucleotide-binding</keyword>
<keyword id="KW-0548">Nucleotidyltransferase</keyword>
<keyword id="KW-0808">Transferase</keyword>
<feature type="chain" id="PRO_1000008992" description="Sulfate adenylyltransferase subunit 2">
    <location>
        <begin position="1"/>
        <end position="302"/>
    </location>
</feature>
<feature type="region of interest" description="Disordered" evidence="2">
    <location>
        <begin position="280"/>
        <end position="302"/>
    </location>
</feature>
<evidence type="ECO:0000255" key="1">
    <source>
        <dbReference type="HAMAP-Rule" id="MF_00064"/>
    </source>
</evidence>
<evidence type="ECO:0000256" key="2">
    <source>
        <dbReference type="SAM" id="MobiDB-lite"/>
    </source>
</evidence>
<dbReference type="EC" id="2.7.7.4" evidence="1"/>
<dbReference type="EMBL" id="CP000503">
    <property type="protein sequence ID" value="ABM23752.1"/>
    <property type="molecule type" value="Genomic_DNA"/>
</dbReference>
<dbReference type="RefSeq" id="WP_011788279.1">
    <property type="nucleotide sequence ID" value="NC_008750.1"/>
</dbReference>
<dbReference type="SMR" id="A1RGF7"/>
<dbReference type="KEGG" id="shw:Sputw3181_0902"/>
<dbReference type="HOGENOM" id="CLU_043026_0_0_6"/>
<dbReference type="UniPathway" id="UPA00140">
    <property type="reaction ID" value="UER00204"/>
</dbReference>
<dbReference type="Proteomes" id="UP000002597">
    <property type="component" value="Chromosome"/>
</dbReference>
<dbReference type="GO" id="GO:0005524">
    <property type="term" value="F:ATP binding"/>
    <property type="evidence" value="ECO:0007669"/>
    <property type="project" value="UniProtKB-KW"/>
</dbReference>
<dbReference type="GO" id="GO:0004781">
    <property type="term" value="F:sulfate adenylyltransferase (ATP) activity"/>
    <property type="evidence" value="ECO:0007669"/>
    <property type="project" value="UniProtKB-UniRule"/>
</dbReference>
<dbReference type="GO" id="GO:0070814">
    <property type="term" value="P:hydrogen sulfide biosynthetic process"/>
    <property type="evidence" value="ECO:0007669"/>
    <property type="project" value="UniProtKB-UniRule"/>
</dbReference>
<dbReference type="GO" id="GO:0000103">
    <property type="term" value="P:sulfate assimilation"/>
    <property type="evidence" value="ECO:0007669"/>
    <property type="project" value="UniProtKB-UniRule"/>
</dbReference>
<dbReference type="CDD" id="cd23946">
    <property type="entry name" value="Sulfate_adenylyltransferase_2"/>
    <property type="match status" value="1"/>
</dbReference>
<dbReference type="FunFam" id="3.40.50.620:FF:000002">
    <property type="entry name" value="Sulfate adenylyltransferase subunit 2"/>
    <property type="match status" value="1"/>
</dbReference>
<dbReference type="Gene3D" id="3.40.50.620">
    <property type="entry name" value="HUPs"/>
    <property type="match status" value="1"/>
</dbReference>
<dbReference type="HAMAP" id="MF_00064">
    <property type="entry name" value="Sulf_adenylyltr_sub2"/>
    <property type="match status" value="1"/>
</dbReference>
<dbReference type="InterPro" id="IPR002500">
    <property type="entry name" value="PAPS_reduct_dom"/>
</dbReference>
<dbReference type="InterPro" id="IPR014729">
    <property type="entry name" value="Rossmann-like_a/b/a_fold"/>
</dbReference>
<dbReference type="InterPro" id="IPR011784">
    <property type="entry name" value="SO4_adenylTrfase_ssu"/>
</dbReference>
<dbReference type="InterPro" id="IPR050128">
    <property type="entry name" value="Sulfate_adenylyltrnsfr_sub2"/>
</dbReference>
<dbReference type="NCBIfam" id="TIGR02039">
    <property type="entry name" value="CysD"/>
    <property type="match status" value="1"/>
</dbReference>
<dbReference type="NCBIfam" id="NF003587">
    <property type="entry name" value="PRK05253.1"/>
    <property type="match status" value="1"/>
</dbReference>
<dbReference type="NCBIfam" id="NF009214">
    <property type="entry name" value="PRK12563.1"/>
    <property type="match status" value="1"/>
</dbReference>
<dbReference type="PANTHER" id="PTHR43196">
    <property type="entry name" value="SULFATE ADENYLYLTRANSFERASE SUBUNIT 2"/>
    <property type="match status" value="1"/>
</dbReference>
<dbReference type="PANTHER" id="PTHR43196:SF1">
    <property type="entry name" value="SULFATE ADENYLYLTRANSFERASE SUBUNIT 2"/>
    <property type="match status" value="1"/>
</dbReference>
<dbReference type="Pfam" id="PF01507">
    <property type="entry name" value="PAPS_reduct"/>
    <property type="match status" value="1"/>
</dbReference>
<dbReference type="PIRSF" id="PIRSF002936">
    <property type="entry name" value="CysDAde_trans"/>
    <property type="match status" value="1"/>
</dbReference>
<dbReference type="SUPFAM" id="SSF52402">
    <property type="entry name" value="Adenine nucleotide alpha hydrolases-like"/>
    <property type="match status" value="1"/>
</dbReference>
<protein>
    <recommendedName>
        <fullName evidence="1">Sulfate adenylyltransferase subunit 2</fullName>
        <ecNumber evidence="1">2.7.7.4</ecNumber>
    </recommendedName>
    <alternativeName>
        <fullName evidence="1">ATP-sulfurylase small subunit</fullName>
    </alternativeName>
    <alternativeName>
        <fullName evidence="1">Sulfate adenylate transferase</fullName>
        <shortName evidence="1">SAT</shortName>
    </alternativeName>
</protein>
<comment type="function">
    <text evidence="1">With CysN forms the ATP sulfurylase (ATPS) that catalyzes the adenylation of sulfate producing adenosine 5'-phosphosulfate (APS) and diphosphate, the first enzymatic step in sulfur assimilation pathway. APS synthesis involves the formation of a high-energy phosphoric-sulfuric acid anhydride bond driven by GTP hydrolysis by CysN coupled to ATP hydrolysis by CysD.</text>
</comment>
<comment type="catalytic activity">
    <reaction evidence="1">
        <text>sulfate + ATP + H(+) = adenosine 5'-phosphosulfate + diphosphate</text>
        <dbReference type="Rhea" id="RHEA:18133"/>
        <dbReference type="ChEBI" id="CHEBI:15378"/>
        <dbReference type="ChEBI" id="CHEBI:16189"/>
        <dbReference type="ChEBI" id="CHEBI:30616"/>
        <dbReference type="ChEBI" id="CHEBI:33019"/>
        <dbReference type="ChEBI" id="CHEBI:58243"/>
        <dbReference type="EC" id="2.7.7.4"/>
    </reaction>
</comment>
<comment type="pathway">
    <text evidence="1">Sulfur metabolism; hydrogen sulfide biosynthesis; sulfite from sulfate: step 1/3.</text>
</comment>
<comment type="subunit">
    <text evidence="1">Heterodimer composed of CysD, the smaller subunit, and CysN.</text>
</comment>
<comment type="similarity">
    <text evidence="1">Belongs to the PAPS reductase family. CysD subfamily.</text>
</comment>
<gene>
    <name evidence="1" type="primary">cysD</name>
    <name type="ordered locus">Sputw3181_0902</name>
</gene>
<sequence>MAGRELSHLQQLEAESIQIIREVAAEFDNPVMLYSIGKDSSVMLHLARKAFYPGKIPFPLLHVDTGWKFKEMIAFRDTQAKKFGFELLTHINPEGLAQGINPFDHGSAKHTDIMKTQGLKQALNQYGFDAAFGGARRDEEKSRAKERVYSFRDRHHRWDPKNQRPELWRTYNGAVNKGESIRVFPLSNWTELDIWQYIYQENIELVPLYFAAKRKVVERGGQLIMADDERMQLAEGEQIKEEVVRFRTLGCYPLTAAMHSEADSLEKIIEEMLLTRSSERQGRLIDSDQSASMEQKKRQGYF</sequence>
<proteinExistence type="inferred from homology"/>
<name>CYSD_SHESW</name>
<accession>A1RGF7</accession>
<organism>
    <name type="scientific">Shewanella sp. (strain W3-18-1)</name>
    <dbReference type="NCBI Taxonomy" id="351745"/>
    <lineage>
        <taxon>Bacteria</taxon>
        <taxon>Pseudomonadati</taxon>
        <taxon>Pseudomonadota</taxon>
        <taxon>Gammaproteobacteria</taxon>
        <taxon>Alteromonadales</taxon>
        <taxon>Shewanellaceae</taxon>
        <taxon>Shewanella</taxon>
    </lineage>
</organism>
<reference key="1">
    <citation type="submission" date="2006-12" db="EMBL/GenBank/DDBJ databases">
        <title>Complete sequence of Shewanella sp. W3-18-1.</title>
        <authorList>
            <consortium name="US DOE Joint Genome Institute"/>
            <person name="Copeland A."/>
            <person name="Lucas S."/>
            <person name="Lapidus A."/>
            <person name="Barry K."/>
            <person name="Detter J.C."/>
            <person name="Glavina del Rio T."/>
            <person name="Hammon N."/>
            <person name="Israni S."/>
            <person name="Dalin E."/>
            <person name="Tice H."/>
            <person name="Pitluck S."/>
            <person name="Chain P."/>
            <person name="Malfatti S."/>
            <person name="Shin M."/>
            <person name="Vergez L."/>
            <person name="Schmutz J."/>
            <person name="Larimer F."/>
            <person name="Land M."/>
            <person name="Hauser L."/>
            <person name="Kyrpides N."/>
            <person name="Lykidis A."/>
            <person name="Tiedje J."/>
            <person name="Richardson P."/>
        </authorList>
    </citation>
    <scope>NUCLEOTIDE SEQUENCE [LARGE SCALE GENOMIC DNA]</scope>
    <source>
        <strain>W3-18-1</strain>
    </source>
</reference>